<keyword id="KW-0256">Endoplasmic reticulum</keyword>
<keyword id="KW-0472">Membrane</keyword>
<keyword id="KW-0521">NADP</keyword>
<keyword id="KW-0560">Oxidoreductase</keyword>
<keyword id="KW-0676">Redox-active center</keyword>
<keyword id="KW-1185">Reference proteome</keyword>
<keyword id="KW-0712">Selenocysteine</keyword>
<keyword id="KW-0732">Signal</keyword>
<gene>
    <name evidence="5" type="primary">selenot1b</name>
    <name evidence="6" type="synonym">selt1b</name>
</gene>
<organism>
    <name type="scientific">Danio rerio</name>
    <name type="common">Zebrafish</name>
    <name type="synonym">Brachydanio rerio</name>
    <dbReference type="NCBI Taxonomy" id="7955"/>
    <lineage>
        <taxon>Eukaryota</taxon>
        <taxon>Metazoa</taxon>
        <taxon>Chordata</taxon>
        <taxon>Craniata</taxon>
        <taxon>Vertebrata</taxon>
        <taxon>Euteleostomi</taxon>
        <taxon>Actinopterygii</taxon>
        <taxon>Neopterygii</taxon>
        <taxon>Teleostei</taxon>
        <taxon>Ostariophysi</taxon>
        <taxon>Cypriniformes</taxon>
        <taxon>Danionidae</taxon>
        <taxon>Danioninae</taxon>
        <taxon>Danio</taxon>
    </lineage>
</organism>
<protein>
    <recommendedName>
        <fullName evidence="5">Thioredoxin reductase-like selenoprotein T1b</fullName>
        <ecNumber evidence="2">1.8.1.9</ecNumber>
    </recommendedName>
</protein>
<accession>Q6PHY8</accession>
<accession>Q802G5</accession>
<name>SELTB_DANRE</name>
<feature type="signal peptide" evidence="3">
    <location>
        <begin position="1"/>
        <end position="21"/>
    </location>
</feature>
<feature type="chain" id="PRO_0000252042" description="Thioredoxin reductase-like selenoprotein T1b" evidence="3">
    <location>
        <begin position="22"/>
        <end position="193"/>
    </location>
</feature>
<feature type="non-standard amino acid" description="Selenocysteine" evidence="6">
    <location>
        <position position="47"/>
    </location>
</feature>
<feature type="cross-link" description="Cysteinyl-selenocysteine (Cys-Sec)" evidence="3">
    <location>
        <begin position="44"/>
        <end position="47"/>
    </location>
</feature>
<feature type="sequence conflict" description="In Ref. 2; AAO86700." evidence="5" ref="2">
    <original>F</original>
    <variation>L</variation>
    <location>
        <position position="53"/>
    </location>
</feature>
<feature type="sequence conflict" description="In Ref. 2; AAO86700." evidence="5" ref="2">
    <original>I</original>
    <variation>F</variation>
    <location>
        <position position="83"/>
    </location>
</feature>
<proteinExistence type="evidence at transcript level"/>
<comment type="function">
    <text evidence="2">Selenoprotein with thioredoxin reductase-like oxidoreductase activity.</text>
</comment>
<comment type="catalytic activity">
    <reaction evidence="2">
        <text>[thioredoxin]-dithiol + NADP(+) = [thioredoxin]-disulfide + NADPH + H(+)</text>
        <dbReference type="Rhea" id="RHEA:20345"/>
        <dbReference type="Rhea" id="RHEA-COMP:10698"/>
        <dbReference type="Rhea" id="RHEA-COMP:10700"/>
        <dbReference type="ChEBI" id="CHEBI:15378"/>
        <dbReference type="ChEBI" id="CHEBI:29950"/>
        <dbReference type="ChEBI" id="CHEBI:50058"/>
        <dbReference type="ChEBI" id="CHEBI:57783"/>
        <dbReference type="ChEBI" id="CHEBI:58349"/>
        <dbReference type="EC" id="1.8.1.9"/>
    </reaction>
</comment>
<comment type="subcellular location">
    <subcellularLocation>
        <location evidence="2">Endoplasmic reticulum membrane</location>
    </subcellularLocation>
</comment>
<comment type="tissue specificity">
    <text evidence="4">Widely expressed in the embryo. High level in embryonic blood at 24 hours post-fertilization (hpf).</text>
</comment>
<comment type="PTM">
    <text evidence="1">May contain a selenide-sulfide bond between Cys-44 and Sec-47. This bond is speculated to serve as redox-active pair (By similarity).</text>
</comment>
<comment type="similarity">
    <text evidence="5">Belongs to the SelWTH family. Selenoprotein T subfamily.</text>
</comment>
<comment type="sequence caution" evidence="5">
    <conflict type="erroneous initiation">
        <sequence resource="EMBL-CDS" id="AAH53147"/>
    </conflict>
    <text>Extended N-terminus.</text>
</comment>
<comment type="sequence caution" evidence="5">
    <conflict type="erroneous initiation">
        <sequence resource="EMBL-CDS" id="AAO86700"/>
    </conflict>
    <text>Extended N-terminus.</text>
</comment>
<dbReference type="EC" id="1.8.1.9" evidence="2"/>
<dbReference type="EMBL" id="BC053147">
    <property type="protein sequence ID" value="AAH53147.2"/>
    <property type="status" value="ALT_INIT"/>
    <property type="molecule type" value="mRNA"/>
</dbReference>
<dbReference type="EMBL" id="AY216586">
    <property type="protein sequence ID" value="AAO86700.1"/>
    <property type="status" value="ALT_INIT"/>
    <property type="molecule type" value="mRNA"/>
</dbReference>
<dbReference type="RefSeq" id="NP_840077.3">
    <property type="nucleotide sequence ID" value="NM_178292.5"/>
</dbReference>
<dbReference type="FunCoup" id="Q6PHY8">
    <property type="interactions" value="287"/>
</dbReference>
<dbReference type="STRING" id="7955.ENSDARP00000120681"/>
<dbReference type="PaxDb" id="7955-ENSDARP00000120681"/>
<dbReference type="Ensembl" id="ENSDART00000146972">
    <property type="protein sequence ID" value="ENSDARP00000120681"/>
    <property type="gene ID" value="ENSDARG00000027595"/>
</dbReference>
<dbReference type="GeneID" id="352921"/>
<dbReference type="KEGG" id="dre:352921"/>
<dbReference type="AGR" id="ZFIN:ZDB-GENE-030411-1"/>
<dbReference type="CTD" id="352921"/>
<dbReference type="ZFIN" id="ZDB-GENE-030411-1">
    <property type="gene designation" value="selenot1b"/>
</dbReference>
<dbReference type="eggNOG" id="KOG3286">
    <property type="taxonomic scope" value="Eukaryota"/>
</dbReference>
<dbReference type="HOGENOM" id="CLU_113870_1_0_1"/>
<dbReference type="InParanoid" id="Q6PHY8"/>
<dbReference type="OMA" id="CGYQRAF"/>
<dbReference type="OrthoDB" id="60822at2759"/>
<dbReference type="PhylomeDB" id="Q6PHY8"/>
<dbReference type="TreeFam" id="TF321235"/>
<dbReference type="PRO" id="PR:Q6PHY8"/>
<dbReference type="Proteomes" id="UP000000437">
    <property type="component" value="Alternate scaffold 18"/>
</dbReference>
<dbReference type="Proteomes" id="UP000000437">
    <property type="component" value="Chromosome 18"/>
</dbReference>
<dbReference type="Bgee" id="ENSDARG00000027595">
    <property type="expression patterns" value="Expressed in mature ovarian follicle and 27 other cell types or tissues"/>
</dbReference>
<dbReference type="GO" id="GO:0005789">
    <property type="term" value="C:endoplasmic reticulum membrane"/>
    <property type="evidence" value="ECO:0000318"/>
    <property type="project" value="GO_Central"/>
</dbReference>
<dbReference type="GO" id="GO:0004791">
    <property type="term" value="F:thioredoxin-disulfide reductase (NADPH) activity"/>
    <property type="evidence" value="ECO:0000318"/>
    <property type="project" value="GO_Central"/>
</dbReference>
<dbReference type="GO" id="GO:0045454">
    <property type="term" value="P:cell redox homeostasis"/>
    <property type="evidence" value="ECO:0000318"/>
    <property type="project" value="GO_Central"/>
</dbReference>
<dbReference type="FunFam" id="3.40.30.10:FF:000085">
    <property type="entry name" value="Selenoprotein T"/>
    <property type="match status" value="1"/>
</dbReference>
<dbReference type="Gene3D" id="3.40.30.10">
    <property type="entry name" value="Glutaredoxin"/>
    <property type="match status" value="1"/>
</dbReference>
<dbReference type="InterPro" id="IPR011893">
    <property type="entry name" value="Selenoprotein_Rdx-typ"/>
</dbReference>
<dbReference type="InterPro" id="IPR019389">
    <property type="entry name" value="Selenoprotein_T"/>
</dbReference>
<dbReference type="InterPro" id="IPR036249">
    <property type="entry name" value="Thioredoxin-like_sf"/>
</dbReference>
<dbReference type="NCBIfam" id="TIGR02174">
    <property type="entry name" value="CXXU_selWTH"/>
    <property type="match status" value="1"/>
</dbReference>
<dbReference type="PANTHER" id="PTHR13544">
    <property type="entry name" value="SELENOPROTEIN T"/>
    <property type="match status" value="1"/>
</dbReference>
<dbReference type="PANTHER" id="PTHR13544:SF7">
    <property type="entry name" value="THIOREDOXIN REDUCTASE-LIKE SELENOPROTEIN T1A-RELATED"/>
    <property type="match status" value="1"/>
</dbReference>
<dbReference type="Pfam" id="PF10262">
    <property type="entry name" value="Rdx"/>
    <property type="match status" value="1"/>
</dbReference>
<dbReference type="SUPFAM" id="SSF52833">
    <property type="entry name" value="Thioredoxin-like"/>
    <property type="match status" value="1"/>
</dbReference>
<evidence type="ECO:0000250" key="1"/>
<evidence type="ECO:0000250" key="2">
    <source>
        <dbReference type="UniProtKB" id="Q1H5H1"/>
    </source>
</evidence>
<evidence type="ECO:0000255" key="3"/>
<evidence type="ECO:0000269" key="4">
    <source>
    </source>
</evidence>
<evidence type="ECO:0000305" key="5"/>
<evidence type="ECO:0000312" key="6">
    <source>
        <dbReference type="EMBL" id="AAH53147.2"/>
    </source>
</evidence>
<evidence type="ECO:0000312" key="7">
    <source>
        <dbReference type="EMBL" id="AAO86700.1"/>
    </source>
</evidence>
<reference evidence="6" key="1">
    <citation type="submission" date="2003-06" db="EMBL/GenBank/DDBJ databases">
        <authorList>
            <consortium name="NIH - Zebrafish Gene Collection (ZGC) project"/>
        </authorList>
    </citation>
    <scope>NUCLEOTIDE SEQUENCE [LARGE SCALE MRNA]</scope>
    <source>
        <tissue evidence="6">Kidney</tissue>
    </source>
</reference>
<reference evidence="5 7" key="2">
    <citation type="journal article" date="2003" name="Gene Expr. Patterns">
        <title>Spatial and temporal expression patterns of selenoprotein genes during embryogenesis in zebrafish.</title>
        <authorList>
            <person name="Thisse C."/>
            <person name="Degrave A."/>
            <person name="Kryukov G.V."/>
            <person name="Gladyshev V.N."/>
            <person name="Obrecht-Pflumio S."/>
            <person name="Krol A."/>
            <person name="Thisse B."/>
            <person name="Lescure A."/>
        </authorList>
    </citation>
    <scope>NUCLEOTIDE SEQUENCE [MRNA] OF 3-193</scope>
    <scope>TISSUE SPECIFICITY</scope>
    <source>
        <tissue evidence="4">Kidney</tissue>
    </source>
</reference>
<sequence>METRCLYLLLVCVLSVNHATADNGSIKKMKMQYTGFPLLKFQICVSUGYRRVFEEYTRVLTQRYPDIRIEGENFLPQPLYRHIASFLSVFKLVVIGLIILGKNPFTYLHIETPGIWLWAQENKIYACTMVFFLSNMIENQCMSTGAFEVTLNDVPVWSKLQSGHLPSMQQLVQILENEMKLSVHMDSLPHRRA</sequence>